<reference key="1">
    <citation type="journal article" date="1997" name="J. Cell Sci.">
        <title>A nematode gene required for sperm vesicle fusion.</title>
        <authorList>
            <person name="Achanzar W.E."/>
            <person name="Ward S."/>
        </authorList>
    </citation>
    <scope>NUCLEOTIDE SEQUENCE [GENOMIC DNA]</scope>
</reference>
<reference key="2">
    <citation type="journal article" date="1998" name="Science">
        <title>Genome sequence of the nematode C. elegans: a platform for investigating biology.</title>
        <authorList>
            <consortium name="The C. elegans sequencing consortium"/>
        </authorList>
    </citation>
    <scope>NUCLEOTIDE SEQUENCE [LARGE SCALE GENOMIC DNA]</scope>
    <source>
        <strain>Bristol N2</strain>
    </source>
</reference>
<keyword id="KW-0217">Developmental protein</keyword>
<keyword id="KW-0221">Differentiation</keyword>
<keyword id="KW-0472">Membrane</keyword>
<keyword id="KW-1185">Reference proteome</keyword>
<keyword id="KW-0677">Repeat</keyword>
<keyword id="KW-0744">Spermatogenesis</keyword>
<keyword id="KW-0812">Transmembrane</keyword>
<keyword id="KW-1133">Transmembrane helix</keyword>
<gene>
    <name type="primary">fer-1</name>
    <name type="ORF">F43G9.6</name>
</gene>
<dbReference type="EMBL" id="U57652">
    <property type="protein sequence ID" value="AAB02243.1"/>
    <property type="molecule type" value="Genomic_DNA"/>
</dbReference>
<dbReference type="EMBL" id="Z79755">
    <property type="protein sequence ID" value="CAB02109.1"/>
    <property type="molecule type" value="Genomic_DNA"/>
</dbReference>
<dbReference type="PIR" id="T22147">
    <property type="entry name" value="T22147"/>
</dbReference>
<dbReference type="RefSeq" id="NP_492337.1">
    <property type="nucleotide sequence ID" value="NM_059936.4"/>
</dbReference>
<dbReference type="SMR" id="Q17388"/>
<dbReference type="BioGRID" id="38092">
    <property type="interactions" value="4"/>
</dbReference>
<dbReference type="FunCoup" id="Q17388">
    <property type="interactions" value="140"/>
</dbReference>
<dbReference type="STRING" id="6239.F43G9.6a.1"/>
<dbReference type="PaxDb" id="6239-F43G9.6a"/>
<dbReference type="EnsemblMetazoa" id="F43G9.6a.1">
    <property type="protein sequence ID" value="F43G9.6a.1"/>
    <property type="gene ID" value="WBGene00001414"/>
</dbReference>
<dbReference type="GeneID" id="172659"/>
<dbReference type="KEGG" id="cel:CELE_F43G9.6"/>
<dbReference type="UCSC" id="F43G9.6b">
    <property type="organism name" value="c. elegans"/>
</dbReference>
<dbReference type="AGR" id="WB:WBGene00001414"/>
<dbReference type="CTD" id="172659"/>
<dbReference type="WormBase" id="F43G9.6a">
    <property type="protein sequence ID" value="CE10364"/>
    <property type="gene ID" value="WBGene00001414"/>
    <property type="gene designation" value="fer-1"/>
</dbReference>
<dbReference type="eggNOG" id="KOG1326">
    <property type="taxonomic scope" value="Eukaryota"/>
</dbReference>
<dbReference type="GeneTree" id="ENSGT00940000167153"/>
<dbReference type="InParanoid" id="Q17388"/>
<dbReference type="OMA" id="KHCGRTQ"/>
<dbReference type="OrthoDB" id="270970at2759"/>
<dbReference type="PhylomeDB" id="Q17388"/>
<dbReference type="PRO" id="PR:Q17388"/>
<dbReference type="Proteomes" id="UP000001940">
    <property type="component" value="Chromosome I"/>
</dbReference>
<dbReference type="Bgee" id="WBGene00001414">
    <property type="expression patterns" value="Expressed in germ cell and 5 other cell types or tissues"/>
</dbReference>
<dbReference type="ExpressionAtlas" id="Q17388">
    <property type="expression patterns" value="baseline and differential"/>
</dbReference>
<dbReference type="GO" id="GO:0032809">
    <property type="term" value="C:neuronal cell body membrane"/>
    <property type="evidence" value="ECO:0000314"/>
    <property type="project" value="WormBase"/>
</dbReference>
<dbReference type="GO" id="GO:0031090">
    <property type="term" value="C:organelle membrane"/>
    <property type="evidence" value="ECO:0000314"/>
    <property type="project" value="WormBase"/>
</dbReference>
<dbReference type="GO" id="GO:0005886">
    <property type="term" value="C:plasma membrane"/>
    <property type="evidence" value="ECO:0000314"/>
    <property type="project" value="WormBase"/>
</dbReference>
<dbReference type="GO" id="GO:0031260">
    <property type="term" value="C:pseudopodium membrane"/>
    <property type="evidence" value="ECO:0000314"/>
    <property type="project" value="WormBase"/>
</dbReference>
<dbReference type="GO" id="GO:0005544">
    <property type="term" value="F:calcium-dependent phospholipid binding"/>
    <property type="evidence" value="ECO:0000250"/>
    <property type="project" value="WormBase"/>
</dbReference>
<dbReference type="GO" id="GO:0097723">
    <property type="term" value="P:amoeboid sperm motility"/>
    <property type="evidence" value="ECO:0000315"/>
    <property type="project" value="WormBase"/>
</dbReference>
<dbReference type="GO" id="GO:0061025">
    <property type="term" value="P:membrane fusion"/>
    <property type="evidence" value="ECO:0000315"/>
    <property type="project" value="WormBase"/>
</dbReference>
<dbReference type="GO" id="GO:0007009">
    <property type="term" value="P:plasma membrane organization"/>
    <property type="evidence" value="ECO:0000315"/>
    <property type="project" value="WormBase"/>
</dbReference>
<dbReference type="GO" id="GO:0001778">
    <property type="term" value="P:plasma membrane repair"/>
    <property type="evidence" value="ECO:0000318"/>
    <property type="project" value="GO_Central"/>
</dbReference>
<dbReference type="GO" id="GO:0031268">
    <property type="term" value="P:pseudopodium organization"/>
    <property type="evidence" value="ECO:0000315"/>
    <property type="project" value="WormBase"/>
</dbReference>
<dbReference type="GO" id="GO:0007283">
    <property type="term" value="P:spermatogenesis"/>
    <property type="evidence" value="ECO:0000315"/>
    <property type="project" value="WormBase"/>
</dbReference>
<dbReference type="GO" id="GO:0033292">
    <property type="term" value="P:T-tubule organization"/>
    <property type="evidence" value="ECO:0000318"/>
    <property type="project" value="GO_Central"/>
</dbReference>
<dbReference type="CDD" id="cd04017">
    <property type="entry name" value="C2D_Ferlin"/>
    <property type="match status" value="1"/>
</dbReference>
<dbReference type="CDD" id="cd04037">
    <property type="entry name" value="C2E_Ferlin"/>
    <property type="match status" value="1"/>
</dbReference>
<dbReference type="CDD" id="cd08374">
    <property type="entry name" value="C2F_Ferlin"/>
    <property type="match status" value="1"/>
</dbReference>
<dbReference type="FunFam" id="2.60.40.150:FF:000364">
    <property type="entry name" value="Sperm vesicle fusion protein fer-1"/>
    <property type="match status" value="1"/>
</dbReference>
<dbReference type="Gene3D" id="2.60.40.150">
    <property type="entry name" value="C2 domain"/>
    <property type="match status" value="3"/>
</dbReference>
<dbReference type="InterPro" id="IPR000008">
    <property type="entry name" value="C2_dom"/>
</dbReference>
<dbReference type="InterPro" id="IPR035892">
    <property type="entry name" value="C2_domain_sf"/>
</dbReference>
<dbReference type="InterPro" id="IPR037723">
    <property type="entry name" value="C2D_Ferlin"/>
</dbReference>
<dbReference type="InterPro" id="IPR037724">
    <property type="entry name" value="C2E_Ferlin"/>
</dbReference>
<dbReference type="InterPro" id="IPR037725">
    <property type="entry name" value="C2F_Ferlin"/>
</dbReference>
<dbReference type="InterPro" id="IPR037721">
    <property type="entry name" value="Ferlin"/>
</dbReference>
<dbReference type="InterPro" id="IPR012560">
    <property type="entry name" value="Ferlin_A-domain"/>
</dbReference>
<dbReference type="InterPro" id="IPR012561">
    <property type="entry name" value="Ferlin_B-domain"/>
</dbReference>
<dbReference type="InterPro" id="IPR032362">
    <property type="entry name" value="Ferlin_C"/>
</dbReference>
<dbReference type="InterPro" id="IPR055072">
    <property type="entry name" value="Ferlin_DSRM"/>
</dbReference>
<dbReference type="InterPro" id="IPR006614">
    <property type="entry name" value="Peroxin/Ferlin"/>
</dbReference>
<dbReference type="PANTHER" id="PTHR12546">
    <property type="entry name" value="FER-1-LIKE"/>
    <property type="match status" value="1"/>
</dbReference>
<dbReference type="PANTHER" id="PTHR12546:SF33">
    <property type="entry name" value="SPERM VESICLE FUSION PROTEIN FER-1"/>
    <property type="match status" value="1"/>
</dbReference>
<dbReference type="Pfam" id="PF00168">
    <property type="entry name" value="C2"/>
    <property type="match status" value="4"/>
</dbReference>
<dbReference type="Pfam" id="PF22901">
    <property type="entry name" value="dsrm_Ferlin"/>
    <property type="match status" value="1"/>
</dbReference>
<dbReference type="Pfam" id="PF08165">
    <property type="entry name" value="FerA"/>
    <property type="match status" value="1"/>
</dbReference>
<dbReference type="Pfam" id="PF08150">
    <property type="entry name" value="FerB"/>
    <property type="match status" value="1"/>
</dbReference>
<dbReference type="Pfam" id="PF16165">
    <property type="entry name" value="Ferlin_C"/>
    <property type="match status" value="1"/>
</dbReference>
<dbReference type="SMART" id="SM00239">
    <property type="entry name" value="C2"/>
    <property type="match status" value="4"/>
</dbReference>
<dbReference type="SMART" id="SM00694">
    <property type="entry name" value="DysFC"/>
    <property type="match status" value="2"/>
</dbReference>
<dbReference type="SMART" id="SM00693">
    <property type="entry name" value="DysFN"/>
    <property type="match status" value="2"/>
</dbReference>
<dbReference type="SMART" id="SM01200">
    <property type="entry name" value="FerA"/>
    <property type="match status" value="1"/>
</dbReference>
<dbReference type="SMART" id="SM01201">
    <property type="entry name" value="FerB"/>
    <property type="match status" value="1"/>
</dbReference>
<dbReference type="SUPFAM" id="SSF49562">
    <property type="entry name" value="C2 domain (Calcium/lipid-binding domain, CaLB)"/>
    <property type="match status" value="4"/>
</dbReference>
<dbReference type="PROSITE" id="PS50004">
    <property type="entry name" value="C2"/>
    <property type="match status" value="5"/>
</dbReference>
<accession>Q17388</accession>
<organism>
    <name type="scientific">Caenorhabditis elegans</name>
    <dbReference type="NCBI Taxonomy" id="6239"/>
    <lineage>
        <taxon>Eukaryota</taxon>
        <taxon>Metazoa</taxon>
        <taxon>Ecdysozoa</taxon>
        <taxon>Nematoda</taxon>
        <taxon>Chromadorea</taxon>
        <taxon>Rhabditida</taxon>
        <taxon>Rhabditina</taxon>
        <taxon>Rhabditomorpha</taxon>
        <taxon>Rhabditoidea</taxon>
        <taxon>Rhabditidae</taxon>
        <taxon>Peloderinae</taxon>
        <taxon>Caenorhabditis</taxon>
    </lineage>
</organism>
<comment type="function">
    <text>Required for the fusion of the membranous organelles (MOs) with the plasma membrane, a process essential in spermiogenesis.</text>
</comment>
<comment type="subcellular location">
    <subcellularLocation>
        <location evidence="1">Membrane</location>
        <topology evidence="1">Single-pass type II membrane protein</topology>
    </subcellularLocation>
</comment>
<comment type="tissue specificity">
    <text>Exclusively expressed in the testis.</text>
</comment>
<comment type="similarity">
    <text evidence="5">Belongs to the ferlin family.</text>
</comment>
<sequence length="2034" mass="235241">MTVKEKLLKVKQKFKRGDSSSDVDSGPERDRDEDDSDNESRNTSKTSKSSKKSKSGKSTGTSEMTELSDDGGSDIELLPDDGKSFGKRKLQDTDKPCTWNVLVRIIEAKDVSTGSARVRTIFDGNSKMTRTVTHAIPKWRQNILYTIKNQPLEKLAAKVLTLRLVRPTALGESSVGEFSCYLSEVIHSPDRSVIAKWVALGFPGMDDEEPDDIAYENCGFLKVTLSVYRIDESPPTLIDDDGKEQIWSGAHLIDYTLKIRVFSVEQLIRQMINERKIKKKQRFYVMVQCGAHKTETTMESAFLDEDANIASVKFEQEIYLPIQWPTVISEIIFSLFDKKGRGKTCIGKATLPMKMIYEPGETGYLPTFGPAFLNVFDCERVTRFSIFSRKMRGSQQDGSRFVGRLFIAIDCVEYMEKANAQIMHLDHSPIMEAESICKNLEWYNCFCSMSGLNMINPQFASDPVCIMMSIGSFGSTSNEFRSCNSSTLPAEPNWDGCKYFTMPWGNLRPVAEVNAPWEVIEHRIEMSNVLMKMTNMLDTMIWEVRRIGNKAIDHVSSVGMEALECLEQQIDSASKYLGRINPVSSNALDRHILDYRKEKILKLREHFEKEAFSIDYSDGEVDAKLLRMLLKIRSMTLELAEDVQMTIPPVLIKMMSHGKLIGFAKIPISEIFQSDDEAQSGEWCGRTRAINIQWPTLVDQRNRKREHVAVLHAKMWFGRTDQLTKWKEHVQPADIRRFMEMYEVQTKGLALKWKDEADIYDGKWEKTNEVPLENGWNAVGHWIVMNTRHMFVPKLGQHTVHDKAFEIQKRTEDGTWKHFKYTDCYADELKPKDLDKHAKGWEVGSWAQDKFRNNGDEKGWVYSTNGVFFGSGVLTDREEKVHHNFRKRCIKRPRKHEGYNKELEDFEHFRTTMGNENWEYSPSKKEGPYHDLEDRTDRIRRRRYVREVENKDPDSEDPRFRVYEYQMQTGKWQLRCYIMWGNDLLPVVKNSSRAFVRISFAQYSKQTLLVDNSQNPIWNETVMFKSVLIAGGTRDIMKYPPVVSVEVVGECSNNEEANLGHFETKPNVICGNTDVRGTPQWFPLKFSNGRTRGAVLACFELYSEEDKDLIPLEPKCKHNYKERSEIPTEFRPQFDKFHVQFLCWGVRNLKKHKLLAVRRPFVGLTIGDQEFTLQPLKDVRRDPNFPEPMIVFGEVILPSALELSPPLIINLFDARAFNRQPLVGSCLVSDLHKYVSHIVPKVKSDHAERWEQLDLVITEEFDQIIRMVRVPTLTTDPMVPLDWWSRYYASMSQFHRSPGYPESGMEYVRIFRRPLEQMNGYNNFSDFLDTFPFVKSMKGDFDDPEEKEKAGELKCRLLISKLKKGKPPAAINTVVDFVGPTRCLVRVYIIEANGLISNARKGRVDSYVKLHCGKQNVNLKKNYRSECCDPIFGERVDMTVTIPLEKDLKITVMGKRRILSDQEIGSTTIDLENRLLTKWRATGGLSGQFTVQGELQWRDQMTPMEILKSYCYKMMLSVPKIESRQTERGEEKGITIEKITFWFSEVLHVFENEEIAMLNSQRQKAGKENFSDGSDQQNEDVSDGSWDEEDLEREKEKLKWEKHRSKGKPLKKVTTEKAETADGELRKKAKMRIMGSQLQTIALFILRQMNLVPEHVESRPLFSDKGGRTQKGELRMFVDIFPMEYGAIPAPFNIAPRKPINYQLRIAVMDVRGAIPVKRSFAEPVSDLYVKAFINGMTKGHKTDTHFRVLDGTGEFNWRFLLNFDYNPWEKKVVAYTKNRFFCKPVEELVDPILVIELWDKNKFRKDRLLGDIELDLLDFIEGIGSPSDVGVYSTKKRQRGVKCPKCCTRRGCLCKCCIFCFETKCLCGKRKVKKKPFPKPVLFVEPEGYDDTVNIFESRNLYGWWPMLTEEYPHEEPQNAKKKNDDVGKDPKWIMGLVEMDMLLLTKQEADQEPAGKKRSEPNHSPFLEKPDRKSWANSWLVSRIKPCIKYFWHYYGLQILLWLIIIVILILTIFVLLHTWPTILAEIIKAIF</sequence>
<protein>
    <recommendedName>
        <fullName>Sperm vesicle fusion protein fer-1</fullName>
    </recommendedName>
</protein>
<proteinExistence type="evidence at transcript level"/>
<name>FER1_CAEEL</name>
<feature type="chain" id="PRO_0000057885" description="Sperm vesicle fusion protein fer-1">
    <location>
        <begin position="1"/>
        <end position="2034"/>
    </location>
</feature>
<feature type="topological domain" description="Cytoplasmic" evidence="2">
    <location>
        <begin position="1"/>
        <end position="1998"/>
    </location>
</feature>
<feature type="transmembrane region" description="Helical" evidence="2">
    <location>
        <begin position="1999"/>
        <end position="2019"/>
    </location>
</feature>
<feature type="topological domain" description="Extracellular" evidence="2">
    <location>
        <begin position="2020"/>
        <end position="2034"/>
    </location>
</feature>
<feature type="domain" description="C2 1" evidence="3">
    <location>
        <begin position="229"/>
        <end position="367"/>
    </location>
</feature>
<feature type="domain" description="C2 2" evidence="3">
    <location>
        <begin position="954"/>
        <end position="1082"/>
    </location>
</feature>
<feature type="domain" description="C2 3" evidence="3">
    <location>
        <begin position="1120"/>
        <end position="1246"/>
    </location>
</feature>
<feature type="domain" description="C2 4" evidence="3">
    <location>
        <begin position="1363"/>
        <end position="1484"/>
    </location>
</feature>
<feature type="domain" description="C2 5" evidence="3">
    <location>
        <begin position="1684"/>
        <end position="1831"/>
    </location>
</feature>
<feature type="region of interest" description="Disordered" evidence="4">
    <location>
        <begin position="1"/>
        <end position="80"/>
    </location>
</feature>
<feature type="region of interest" description="Disordered" evidence="4">
    <location>
        <begin position="1563"/>
        <end position="1619"/>
    </location>
</feature>
<feature type="region of interest" description="Disordered" evidence="4">
    <location>
        <begin position="1953"/>
        <end position="1972"/>
    </location>
</feature>
<feature type="compositionally biased region" description="Acidic residues" evidence="4">
    <location>
        <begin position="66"/>
        <end position="79"/>
    </location>
</feature>
<feature type="compositionally biased region" description="Acidic residues" evidence="4">
    <location>
        <begin position="1577"/>
        <end position="1591"/>
    </location>
</feature>
<feature type="compositionally biased region" description="Basic residues" evidence="4">
    <location>
        <begin position="1600"/>
        <end position="1611"/>
    </location>
</feature>
<evidence type="ECO:0000250" key="1"/>
<evidence type="ECO:0000255" key="2"/>
<evidence type="ECO:0000255" key="3">
    <source>
        <dbReference type="PROSITE-ProRule" id="PRU00041"/>
    </source>
</evidence>
<evidence type="ECO:0000256" key="4">
    <source>
        <dbReference type="SAM" id="MobiDB-lite"/>
    </source>
</evidence>
<evidence type="ECO:0000305" key="5"/>